<proteinExistence type="evidence at protein level"/>
<name>PLCB_HUMAN</name>
<reference key="1">
    <citation type="journal article" date="1997" name="J. Biol. Chem.">
        <title>Human lysophosphatidic acid acyltransferase. cDNA cloning, expression, and localization to chromosome 9q34.3.</title>
        <authorList>
            <person name="Eberhardt C."/>
            <person name="Gray P.W."/>
            <person name="Tjoelker L.W."/>
        </authorList>
    </citation>
    <scope>NUCLEOTIDE SEQUENCE [MRNA] (ISOFORM 1)</scope>
    <scope>FUNCTION</scope>
    <scope>CATALYTIC ACTIVITY</scope>
    <scope>TISSUE SPECIFICITY</scope>
</reference>
<reference key="2">
    <citation type="journal article" date="1997" name="Biochem. J.">
        <title>A human cDNA sequence with homology to non-mammalian lysophosphatidic acid acyltransferases.</title>
        <authorList>
            <person name="Stamps A.C."/>
            <person name="Elmore M.A."/>
            <person name="Hill M.E."/>
            <person name="Kelly K."/>
            <person name="Makda A.A."/>
            <person name="Finnen M.J."/>
        </authorList>
    </citation>
    <scope>NUCLEOTIDE SEQUENCE [MRNA] (ISOFORM 1)</scope>
</reference>
<reference key="3">
    <citation type="journal article" date="1997" name="DNA Cell Biol.">
        <title>Cloning and expression of two human lysophosphatidic acid acyltransferase cDNAs that enhance cytokine-induced signaling responses in cells.</title>
        <authorList>
            <person name="West J."/>
            <person name="Tompkins C.K."/>
            <person name="Balantac N."/>
            <person name="Nudelman E."/>
            <person name="Meengs B."/>
            <person name="White T."/>
            <person name="Bursten S."/>
            <person name="Coleman J."/>
            <person name="Kumar A."/>
            <person name="Singer J.W."/>
            <person name="Leung D.W."/>
        </authorList>
    </citation>
    <scope>NUCLEOTIDE SEQUENCE [MRNA] (ISOFORM 1)</scope>
</reference>
<reference key="4">
    <citation type="submission" date="2001-05" db="EMBL/GenBank/DDBJ databases">
        <authorList>
            <person name="Leung D.W."/>
            <person name="Tompkin C.K."/>
            <person name="West J."/>
        </authorList>
    </citation>
    <scope>SEQUENCE REVISION TO 51</scope>
</reference>
<reference key="5">
    <citation type="journal article" date="2004" name="Nature">
        <title>DNA sequence and analysis of human chromosome 9.</title>
        <authorList>
            <person name="Humphray S.J."/>
            <person name="Oliver K."/>
            <person name="Hunt A.R."/>
            <person name="Plumb R.W."/>
            <person name="Loveland J.E."/>
            <person name="Howe K.L."/>
            <person name="Andrews T.D."/>
            <person name="Searle S."/>
            <person name="Hunt S.E."/>
            <person name="Scott C.E."/>
            <person name="Jones M.C."/>
            <person name="Ainscough R."/>
            <person name="Almeida J.P."/>
            <person name="Ambrose K.D."/>
            <person name="Ashwell R.I.S."/>
            <person name="Babbage A.K."/>
            <person name="Babbage S."/>
            <person name="Bagguley C.L."/>
            <person name="Bailey J."/>
            <person name="Banerjee R."/>
            <person name="Barker D.J."/>
            <person name="Barlow K.F."/>
            <person name="Bates K."/>
            <person name="Beasley H."/>
            <person name="Beasley O."/>
            <person name="Bird C.P."/>
            <person name="Bray-Allen S."/>
            <person name="Brown A.J."/>
            <person name="Brown J.Y."/>
            <person name="Burford D."/>
            <person name="Burrill W."/>
            <person name="Burton J."/>
            <person name="Carder C."/>
            <person name="Carter N.P."/>
            <person name="Chapman J.C."/>
            <person name="Chen Y."/>
            <person name="Clarke G."/>
            <person name="Clark S.Y."/>
            <person name="Clee C.M."/>
            <person name="Clegg S."/>
            <person name="Collier R.E."/>
            <person name="Corby N."/>
            <person name="Crosier M."/>
            <person name="Cummings A.T."/>
            <person name="Davies J."/>
            <person name="Dhami P."/>
            <person name="Dunn M."/>
            <person name="Dutta I."/>
            <person name="Dyer L.W."/>
            <person name="Earthrowl M.E."/>
            <person name="Faulkner L."/>
            <person name="Fleming C.J."/>
            <person name="Frankish A."/>
            <person name="Frankland J.A."/>
            <person name="French L."/>
            <person name="Fricker D.G."/>
            <person name="Garner P."/>
            <person name="Garnett J."/>
            <person name="Ghori J."/>
            <person name="Gilbert J.G.R."/>
            <person name="Glison C."/>
            <person name="Grafham D.V."/>
            <person name="Gribble S."/>
            <person name="Griffiths C."/>
            <person name="Griffiths-Jones S."/>
            <person name="Grocock R."/>
            <person name="Guy J."/>
            <person name="Hall R.E."/>
            <person name="Hammond S."/>
            <person name="Harley J.L."/>
            <person name="Harrison E.S.I."/>
            <person name="Hart E.A."/>
            <person name="Heath P.D."/>
            <person name="Henderson C.D."/>
            <person name="Hopkins B.L."/>
            <person name="Howard P.J."/>
            <person name="Howden P.J."/>
            <person name="Huckle E."/>
            <person name="Johnson C."/>
            <person name="Johnson D."/>
            <person name="Joy A.A."/>
            <person name="Kay M."/>
            <person name="Keenan S."/>
            <person name="Kershaw J.K."/>
            <person name="Kimberley A.M."/>
            <person name="King A."/>
            <person name="Knights A."/>
            <person name="Laird G.K."/>
            <person name="Langford C."/>
            <person name="Lawlor S."/>
            <person name="Leongamornlert D.A."/>
            <person name="Leversha M."/>
            <person name="Lloyd C."/>
            <person name="Lloyd D.M."/>
            <person name="Lovell J."/>
            <person name="Martin S."/>
            <person name="Mashreghi-Mohammadi M."/>
            <person name="Matthews L."/>
            <person name="McLaren S."/>
            <person name="McLay K.E."/>
            <person name="McMurray A."/>
            <person name="Milne S."/>
            <person name="Nickerson T."/>
            <person name="Nisbett J."/>
            <person name="Nordsiek G."/>
            <person name="Pearce A.V."/>
            <person name="Peck A.I."/>
            <person name="Porter K.M."/>
            <person name="Pandian R."/>
            <person name="Pelan S."/>
            <person name="Phillimore B."/>
            <person name="Povey S."/>
            <person name="Ramsey Y."/>
            <person name="Rand V."/>
            <person name="Scharfe M."/>
            <person name="Sehra H.K."/>
            <person name="Shownkeen R."/>
            <person name="Sims S.K."/>
            <person name="Skuce C.D."/>
            <person name="Smith M."/>
            <person name="Steward C.A."/>
            <person name="Swarbreck D."/>
            <person name="Sycamore N."/>
            <person name="Tester J."/>
            <person name="Thorpe A."/>
            <person name="Tracey A."/>
            <person name="Tromans A."/>
            <person name="Thomas D.W."/>
            <person name="Wall M."/>
            <person name="Wallis J.M."/>
            <person name="West A.P."/>
            <person name="Whitehead S.L."/>
            <person name="Willey D.L."/>
            <person name="Williams S.A."/>
            <person name="Wilming L."/>
            <person name="Wray P.W."/>
            <person name="Young L."/>
            <person name="Ashurst J.L."/>
            <person name="Coulson A."/>
            <person name="Blocker H."/>
            <person name="Durbin R.M."/>
            <person name="Sulston J.E."/>
            <person name="Hubbard T."/>
            <person name="Jackson M.J."/>
            <person name="Bentley D.R."/>
            <person name="Beck S."/>
            <person name="Rogers J."/>
            <person name="Dunham I."/>
        </authorList>
    </citation>
    <scope>NUCLEOTIDE SEQUENCE [LARGE SCALE GENOMIC DNA]</scope>
</reference>
<reference key="6">
    <citation type="submission" date="2005-07" db="EMBL/GenBank/DDBJ databases">
        <authorList>
            <person name="Mural R.J."/>
            <person name="Istrail S."/>
            <person name="Sutton G.G."/>
            <person name="Florea L."/>
            <person name="Halpern A.L."/>
            <person name="Mobarry C.M."/>
            <person name="Lippert R."/>
            <person name="Walenz B."/>
            <person name="Shatkay H."/>
            <person name="Dew I."/>
            <person name="Miller J.R."/>
            <person name="Flanigan M.J."/>
            <person name="Edwards N.J."/>
            <person name="Bolanos R."/>
            <person name="Fasulo D."/>
            <person name="Halldorsson B.V."/>
            <person name="Hannenhalli S."/>
            <person name="Turner R."/>
            <person name="Yooseph S."/>
            <person name="Lu F."/>
            <person name="Nusskern D.R."/>
            <person name="Shue B.C."/>
            <person name="Zheng X.H."/>
            <person name="Zhong F."/>
            <person name="Delcher A.L."/>
            <person name="Huson D.H."/>
            <person name="Kravitz S.A."/>
            <person name="Mouchard L."/>
            <person name="Reinert K."/>
            <person name="Remington K.A."/>
            <person name="Clark A.G."/>
            <person name="Waterman M.S."/>
            <person name="Eichler E.E."/>
            <person name="Adams M.D."/>
            <person name="Hunkapiller M.W."/>
            <person name="Myers E.W."/>
            <person name="Venter J.C."/>
        </authorList>
    </citation>
    <scope>NUCLEOTIDE SEQUENCE [LARGE SCALE GENOMIC DNA]</scope>
</reference>
<reference key="7">
    <citation type="journal article" date="2004" name="Genome Res.">
        <title>The status, quality, and expansion of the NIH full-length cDNA project: the Mammalian Gene Collection (MGC).</title>
        <authorList>
            <consortium name="The MGC Project Team"/>
        </authorList>
    </citation>
    <scope>NUCLEOTIDE SEQUENCE [LARGE SCALE MRNA] (ISOFORMS 1 AND 2)</scope>
    <source>
        <tissue>Kidney</tissue>
        <tissue>Skin</tissue>
    </source>
</reference>
<reference key="8">
    <citation type="journal article" date="2004" name="N. Engl. J. Med.">
        <title>Acquired and inherited lipodystrophies.</title>
        <authorList>
            <person name="Garg A."/>
        </authorList>
    </citation>
    <scope>REVIEW</scope>
</reference>
<reference key="9">
    <citation type="journal article" date="2005" name="Biochem. Biophys. Res. Commun.">
        <title>Enzymatic activity of naturally occurring 1-acylglycerol-3-phosphate-O-acyltransferase 2 mutants associated with congenital generalized lipodystrophy.</title>
        <authorList>
            <person name="Haque W."/>
            <person name="Garg A."/>
            <person name="Agarwal A.K."/>
        </authorList>
    </citation>
    <scope>FUNCTION</scope>
    <scope>CATALYTIC ACTIVITY</scope>
    <scope>CHARACTERIZATION OF VARIANTS CGL1 ARG-136; PHE-140 DEL; PRO-228 AND VAL-239</scope>
</reference>
<reference key="10">
    <citation type="journal article" date="2009" name="J. Lipid Res.">
        <title>The microsomal cardiolipin remodeling enzyme acyl-CoA lysocardiolipin acyltransferase is an acyltransferase of multiple anionic lysophospholipids.</title>
        <authorList>
            <person name="Zhao Y."/>
            <person name="Chen Y.-Q."/>
            <person name="Li S."/>
            <person name="Konrad R.J."/>
            <person name="Cao G."/>
        </authorList>
    </citation>
    <scope>CATALYTIC ACTIVITY</scope>
</reference>
<reference key="11">
    <citation type="journal article" date="2011" name="BMC Syst. Biol.">
        <title>Initial characterization of the human central proteome.</title>
        <authorList>
            <person name="Burkard T.R."/>
            <person name="Planyavsky M."/>
            <person name="Kaupe I."/>
            <person name="Breitwieser F.P."/>
            <person name="Buerckstuemmer T."/>
            <person name="Bennett K.L."/>
            <person name="Superti-Furga G."/>
            <person name="Colinge J."/>
        </authorList>
    </citation>
    <scope>IDENTIFICATION BY MASS SPECTROMETRY [LARGE SCALE ANALYSIS]</scope>
</reference>
<reference key="12">
    <citation type="journal article" date="2011" name="J. Biol. Chem.">
        <title>Human 1-acylglycerol-3-phosphate O-acyltransferase isoforms 1 and 2: biochemical characterization and inability to rescue hepatic steatosis in Agpat2(-/-) gene lipodystrophic mice.</title>
        <authorList>
            <person name="Agarwal A.K."/>
            <person name="Sukumaran S."/>
            <person name="Cortes V.A."/>
            <person name="Tunison K."/>
            <person name="Mizrachi D."/>
            <person name="Sankella S."/>
            <person name="Gerard R.D."/>
            <person name="Horton J.D."/>
            <person name="Garg A."/>
        </authorList>
    </citation>
    <scope>FUNCTION</scope>
    <scope>CATALYTIC ACTIVITY</scope>
    <scope>SUBCELLULAR LOCATION</scope>
    <scope>TISSUE SPECIFICITY</scope>
    <scope>BIOPHYSICOCHEMICAL PROPERTIES</scope>
    <scope>MOTIF EGTR</scope>
</reference>
<reference key="13">
    <citation type="journal article" date="2002" name="Nat. Genet.">
        <title>AGPAT2 is mutated in congenital generalized lipodystrophy linked to chromosome 9q34.</title>
        <authorList>
            <person name="Agarwal A.K."/>
            <person name="Arioglu E."/>
            <person name="de Almeida S."/>
            <person name="Akkoc N."/>
            <person name="Taylor S.I."/>
            <person name="Bowcock A.M."/>
            <person name="Barnes R.I."/>
            <person name="Garg A."/>
        </authorList>
    </citation>
    <scope>VARIANTS CGL1 ARG-136; PHE-140 DEL; PRO-228 AND VAL-239</scope>
</reference>
<accession>O15120</accession>
<accession>O00516</accession>
<accession>O15106</accession>
<accession>Q5VUD3</accession>
<accession>Q5VUD4</accession>
<accession>Q9BSV7</accession>
<accession>Q9BWR7</accession>
<evidence type="ECO:0000250" key="1">
    <source>
        <dbReference type="UniProtKB" id="Q9D517"/>
    </source>
</evidence>
<evidence type="ECO:0000255" key="2"/>
<evidence type="ECO:0000269" key="3">
    <source>
    </source>
</evidence>
<evidence type="ECO:0000269" key="4">
    <source>
    </source>
</evidence>
<evidence type="ECO:0000269" key="5">
    <source>
    </source>
</evidence>
<evidence type="ECO:0000269" key="6">
    <source>
    </source>
</evidence>
<evidence type="ECO:0000269" key="7">
    <source>
    </source>
</evidence>
<evidence type="ECO:0000303" key="8">
    <source>
    </source>
</evidence>
<evidence type="ECO:0000303" key="9">
    <source>
    </source>
</evidence>
<evidence type="ECO:0000305" key="10"/>
<evidence type="ECO:0000305" key="11">
    <source>
    </source>
</evidence>
<evidence type="ECO:0000305" key="12">
    <source>
    </source>
</evidence>
<evidence type="ECO:0000305" key="13">
    <source>
    </source>
</evidence>
<evidence type="ECO:0000305" key="14">
    <source>
    </source>
</evidence>
<comment type="function">
    <text evidence="4 5 6 7">Converts 1-acyl-sn-glycerol-3-phosphate (lysophosphatidic acid or LPA) into 1,2-diacyl-sn-glycerol-3-phosphate (phosphatidic acid or PA) by incorporating an acyl moiety at the sn-2 position of the glycerol backbone.</text>
</comment>
<comment type="catalytic activity">
    <reaction evidence="4 5 6 7">
        <text>a 1-acyl-sn-glycero-3-phosphate + an acyl-CoA = a 1,2-diacyl-sn-glycero-3-phosphate + CoA</text>
        <dbReference type="Rhea" id="RHEA:19709"/>
        <dbReference type="ChEBI" id="CHEBI:57287"/>
        <dbReference type="ChEBI" id="CHEBI:57970"/>
        <dbReference type="ChEBI" id="CHEBI:58342"/>
        <dbReference type="ChEBI" id="CHEBI:58608"/>
        <dbReference type="EC" id="2.3.1.51"/>
    </reaction>
    <physiologicalReaction direction="left-to-right" evidence="11 12 13 14">
        <dbReference type="Rhea" id="RHEA:19710"/>
    </physiologicalReaction>
</comment>
<comment type="catalytic activity">
    <reaction evidence="4 6">
        <text>1-(9Z-octadecenoyl)-sn-glycero-3-phosphate + (9Z)-octadecenoyl-CoA = 1,2-di-(9Z-octadecenoyl)-sn-glycero-3-phosphate + CoA</text>
        <dbReference type="Rhea" id="RHEA:37131"/>
        <dbReference type="ChEBI" id="CHEBI:57287"/>
        <dbReference type="ChEBI" id="CHEBI:57387"/>
        <dbReference type="ChEBI" id="CHEBI:74544"/>
        <dbReference type="ChEBI" id="CHEBI:74546"/>
    </reaction>
    <physiologicalReaction direction="left-to-right" evidence="11 13">
        <dbReference type="Rhea" id="RHEA:37132"/>
    </physiologicalReaction>
</comment>
<comment type="catalytic activity">
    <reaction evidence="6">
        <text>1-(9Z-octadecenoyl)-sn-glycero-3-phosphate + hexadecanoyl-CoA = 1-(9Z)-octadecenoyl-2-hexadecanoyl-sn-glycero-3-phosphate + CoA</text>
        <dbReference type="Rhea" id="RHEA:37143"/>
        <dbReference type="ChEBI" id="CHEBI:57287"/>
        <dbReference type="ChEBI" id="CHEBI:57379"/>
        <dbReference type="ChEBI" id="CHEBI:74544"/>
        <dbReference type="ChEBI" id="CHEBI:74551"/>
    </reaction>
    <physiologicalReaction direction="left-to-right" evidence="13">
        <dbReference type="Rhea" id="RHEA:37144"/>
    </physiologicalReaction>
</comment>
<comment type="catalytic activity">
    <reaction evidence="6">
        <text>heptadecanoyl-CoA + 1-(9Z-octadecenoyl)-sn-glycero-3-phosphate = 1-(9Z)-octadecenoyl-2-heptadecanoyl-sn-glycero-3-phosphate + CoA</text>
        <dbReference type="Rhea" id="RHEA:37155"/>
        <dbReference type="ChEBI" id="CHEBI:57287"/>
        <dbReference type="ChEBI" id="CHEBI:74307"/>
        <dbReference type="ChEBI" id="CHEBI:74544"/>
        <dbReference type="ChEBI" id="CHEBI:74558"/>
    </reaction>
    <physiologicalReaction direction="left-to-right" evidence="13">
        <dbReference type="Rhea" id="RHEA:37156"/>
    </physiologicalReaction>
</comment>
<comment type="catalytic activity">
    <reaction evidence="6">
        <text>1-(9Z-octadecenoyl)-sn-glycero-3-phosphate + (9Z,12Z)-octadecadienoyl-CoA = 1-(9Z)-octadecenoyl-2-(9Z,12Z)-octadecadienoyl-sn-glycero-3-phosphate + CoA</text>
        <dbReference type="Rhea" id="RHEA:37159"/>
        <dbReference type="ChEBI" id="CHEBI:57287"/>
        <dbReference type="ChEBI" id="CHEBI:57383"/>
        <dbReference type="ChEBI" id="CHEBI:74544"/>
        <dbReference type="ChEBI" id="CHEBI:74563"/>
    </reaction>
    <physiologicalReaction direction="left-to-right" evidence="13">
        <dbReference type="Rhea" id="RHEA:37160"/>
    </physiologicalReaction>
</comment>
<comment type="catalytic activity">
    <reaction evidence="6">
        <text>1-(9Z-octadecenoyl)-sn-glycero-3-phosphate + tetradecanoyl-CoA = 1-(9Z)-octadecenoyl-2-tetradecanoyl-sn-glycero-3-phosphate + CoA</text>
        <dbReference type="Rhea" id="RHEA:37171"/>
        <dbReference type="ChEBI" id="CHEBI:57287"/>
        <dbReference type="ChEBI" id="CHEBI:57385"/>
        <dbReference type="ChEBI" id="CHEBI:74544"/>
        <dbReference type="ChEBI" id="CHEBI:74579"/>
    </reaction>
    <physiologicalReaction direction="left-to-right" evidence="13">
        <dbReference type="Rhea" id="RHEA:37172"/>
    </physiologicalReaction>
</comment>
<comment type="catalytic activity">
    <reaction evidence="6">
        <text>pentadecanoyl-CoA + 1-(9Z-octadecenoyl)-sn-glycero-3-phosphate = 1-(9Z)-octadecenoyl-2-pentadecanoyl-sn-glycero-3-phosphate + CoA</text>
        <dbReference type="Rhea" id="RHEA:37175"/>
        <dbReference type="ChEBI" id="CHEBI:57287"/>
        <dbReference type="ChEBI" id="CHEBI:74309"/>
        <dbReference type="ChEBI" id="CHEBI:74544"/>
        <dbReference type="ChEBI" id="CHEBI:74578"/>
    </reaction>
    <physiologicalReaction direction="left-to-right" evidence="13">
        <dbReference type="Rhea" id="RHEA:37176"/>
    </physiologicalReaction>
</comment>
<comment type="catalytic activity">
    <reaction evidence="6">
        <text>1-hexadecanoyl-sn-glycero-3-phosphate + (9Z)-octadecenoyl-CoA = 1-hexadecanoyl-2-(9Z-octadecenoyl)-sn-glycero-3-phosphate + CoA</text>
        <dbReference type="Rhea" id="RHEA:33187"/>
        <dbReference type="ChEBI" id="CHEBI:57287"/>
        <dbReference type="ChEBI" id="CHEBI:57387"/>
        <dbReference type="ChEBI" id="CHEBI:57518"/>
        <dbReference type="ChEBI" id="CHEBI:64839"/>
    </reaction>
    <physiologicalReaction direction="left-to-right" evidence="13">
        <dbReference type="Rhea" id="RHEA:33188"/>
    </physiologicalReaction>
</comment>
<comment type="catalytic activity">
    <reaction evidence="6">
        <text>1-tetradecanoyl-sn-glycerol 3-phosphate + (9Z)-octadecenoyl-CoA = 1-tetradecanoyl-2-(9Z)-octadecenoyl-sn-glycero-3-phosphate + CoA</text>
        <dbReference type="Rhea" id="RHEA:37187"/>
        <dbReference type="ChEBI" id="CHEBI:57287"/>
        <dbReference type="ChEBI" id="CHEBI:57387"/>
        <dbReference type="ChEBI" id="CHEBI:72683"/>
        <dbReference type="ChEBI" id="CHEBI:74586"/>
    </reaction>
    <physiologicalReaction direction="left-to-right" evidence="13">
        <dbReference type="Rhea" id="RHEA:37188"/>
    </physiologicalReaction>
</comment>
<comment type="catalytic activity">
    <reaction evidence="6">
        <text>1-(9Z,12Z,15Z)-octadecatrienoyl-sn-glycero-3-phosphate + (9Z)-octadecenoyl-CoA = 1-(9Z,12Z,15Z)-octadecatrienoyl-2-(9Z)-octadecenoyl-sn-glycero-3-phosphate + CoA</text>
        <dbReference type="Rhea" id="RHEA:37139"/>
        <dbReference type="ChEBI" id="CHEBI:57287"/>
        <dbReference type="ChEBI" id="CHEBI:57387"/>
        <dbReference type="ChEBI" id="CHEBI:74549"/>
        <dbReference type="ChEBI" id="CHEBI:74550"/>
    </reaction>
    <physiologicalReaction direction="left-to-right" evidence="13">
        <dbReference type="Rhea" id="RHEA:37140"/>
    </physiologicalReaction>
</comment>
<comment type="catalytic activity">
    <reaction evidence="6">
        <text>1-(6Z,9Z,12Z-octadecatrienoyl)-sn-glycero-3-phosphate + (9Z)-octadecenoyl-CoA = (6Z,9Z,12Z)-octadecatrienoyl-2-(9Z)-octadecenoyl-sn-glycero-3-phosphate + CoA</text>
        <dbReference type="Rhea" id="RHEA:37179"/>
        <dbReference type="ChEBI" id="CHEBI:57287"/>
        <dbReference type="ChEBI" id="CHEBI:57387"/>
        <dbReference type="ChEBI" id="CHEBI:74581"/>
        <dbReference type="ChEBI" id="CHEBI:74582"/>
    </reaction>
    <physiologicalReaction direction="left-to-right" evidence="13">
        <dbReference type="Rhea" id="RHEA:37180"/>
    </physiologicalReaction>
</comment>
<comment type="catalytic activity">
    <reaction evidence="6">
        <text>1-eicosanoyl-sn-glycero-3-phosphate + (9Z)-octadecenoyl-CoA = 1-eicosanoyl-2-(9Z)-octadecenoyl-sn-glycero-3-phosphate + CoA</text>
        <dbReference type="Rhea" id="RHEA:37183"/>
        <dbReference type="ChEBI" id="CHEBI:57287"/>
        <dbReference type="ChEBI" id="CHEBI:57387"/>
        <dbReference type="ChEBI" id="CHEBI:74583"/>
        <dbReference type="ChEBI" id="CHEBI:74584"/>
    </reaction>
    <physiologicalReaction direction="left-to-right" evidence="13">
        <dbReference type="Rhea" id="RHEA:37184"/>
    </physiologicalReaction>
</comment>
<comment type="catalytic activity">
    <reaction evidence="7">
        <text>1-hexadecanoyl-sn-glycero-3-phosphate + octadecanoyl-CoA = 1-hexadecanoyl-2-octadecanoyl-sn-glycero-3-phosphate + CoA</text>
        <dbReference type="Rhea" id="RHEA:35907"/>
        <dbReference type="ChEBI" id="CHEBI:57287"/>
        <dbReference type="ChEBI" id="CHEBI:57394"/>
        <dbReference type="ChEBI" id="CHEBI:57518"/>
        <dbReference type="ChEBI" id="CHEBI:72857"/>
    </reaction>
    <physiologicalReaction direction="left-to-right" evidence="14">
        <dbReference type="Rhea" id="RHEA:35908"/>
    </physiologicalReaction>
</comment>
<comment type="catalytic activity">
    <reaction evidence="7">
        <text>1-hexadecanoyl-sn-glycero-3-phosphate + (5Z,8Z,11Z,14Z)-eicosatetraenoyl-CoA = 1-hexadecanoyl-2-(5Z,8Z,11Z,14Z-eicosatetraenoyl)-sn-glycero-3-phosphate + CoA</text>
        <dbReference type="Rhea" id="RHEA:35915"/>
        <dbReference type="ChEBI" id="CHEBI:57287"/>
        <dbReference type="ChEBI" id="CHEBI:57368"/>
        <dbReference type="ChEBI" id="CHEBI:57518"/>
        <dbReference type="ChEBI" id="CHEBI:72864"/>
    </reaction>
    <physiologicalReaction direction="left-to-right" evidence="14">
        <dbReference type="Rhea" id="RHEA:35916"/>
    </physiologicalReaction>
</comment>
<comment type="catalytic activity">
    <reaction evidence="7">
        <text>1-hexadecanoyl-sn-glycero-3-phosphate + hexadecanoyl-CoA = 1,2-dihexadecanoyl-sn-glycero-3-phosphate + CoA</text>
        <dbReference type="Rhea" id="RHEA:35903"/>
        <dbReference type="ChEBI" id="CHEBI:57287"/>
        <dbReference type="ChEBI" id="CHEBI:57379"/>
        <dbReference type="ChEBI" id="CHEBI:57518"/>
        <dbReference type="ChEBI" id="CHEBI:72859"/>
    </reaction>
    <physiologicalReaction direction="left-to-right" evidence="14">
        <dbReference type="Rhea" id="RHEA:35904"/>
    </physiologicalReaction>
</comment>
<comment type="catalytic activity">
    <reaction evidence="7">
        <text>1-hexadecanoyl-sn-glycero-3-phosphate + tetradecanoyl-CoA = 1-hexadecanoyl-2-tetradecanoyl-sn-glycero-3-phosphate + CoA</text>
        <dbReference type="Rhea" id="RHEA:35899"/>
        <dbReference type="ChEBI" id="CHEBI:57287"/>
        <dbReference type="ChEBI" id="CHEBI:57385"/>
        <dbReference type="ChEBI" id="CHEBI:57518"/>
        <dbReference type="ChEBI" id="CHEBI:72858"/>
    </reaction>
    <physiologicalReaction direction="left-to-right" evidence="14">
        <dbReference type="Rhea" id="RHEA:35900"/>
    </physiologicalReaction>
</comment>
<comment type="catalytic activity">
    <reaction evidence="6">
        <text>(11Z)-octadecenoyl-CoA + 1-(9Z-octadecenoyl)-sn-glycero-3-phosphate = 1-(9Z)-octadecenoyl-2-(11Z)-octadecenoyl-sn-glycero-3-phosphate + CoA</text>
        <dbReference type="Rhea" id="RHEA:37603"/>
        <dbReference type="ChEBI" id="CHEBI:57287"/>
        <dbReference type="ChEBI" id="CHEBI:74544"/>
        <dbReference type="ChEBI" id="CHEBI:75121"/>
        <dbReference type="ChEBI" id="CHEBI:75122"/>
    </reaction>
    <physiologicalReaction direction="left-to-right" evidence="13">
        <dbReference type="Rhea" id="RHEA:37604"/>
    </physiologicalReaction>
</comment>
<comment type="biophysicochemical properties">
    <kinetics>
        <KM evidence="6">11.05 uM for C15:0-CoA</KM>
        <KM evidence="6">523.97 uM for C18:0-CoA</KM>
        <KM evidence="6">30.21 uM for C18:1-CoA</KM>
        <KM evidence="6">8.29 uM for LPA sn-1 C18:1</KM>
        <Vmax evidence="6">51.61 nmol/min/mg enzyme for C15:0-CoA</Vmax>
        <Vmax evidence="6">95.55 nmol/min/mg enzyme for C18:0-CoA</Vmax>
        <Vmax evidence="6">73.81 nmol/min/mg enzyme for C18:1-CoA</Vmax>
        <Vmax evidence="6">86.05 nmol/min/mg enzyme for LPA sn-1 C18:1</Vmax>
    </kinetics>
</comment>
<comment type="pathway">
    <text>Phospholipid metabolism; CDP-diacylglycerol biosynthesis; CDP-diacylglycerol from sn-glycerol 3-phosphate: step 2/3.</text>
</comment>
<comment type="subcellular location">
    <subcellularLocation>
        <location evidence="6">Endoplasmic reticulum membrane</location>
        <topology evidence="2">Multi-pass membrane protein</topology>
    </subcellularLocation>
</comment>
<comment type="alternative products">
    <event type="alternative splicing"/>
    <isoform>
        <id>O15120-1</id>
        <name>1</name>
        <sequence type="displayed"/>
    </isoform>
    <isoform>
        <id>O15120-2</id>
        <name>2</name>
        <sequence type="described" ref="VSP_005071"/>
    </isoform>
</comment>
<comment type="tissue specificity">
    <text evidence="6 7">Expressed predominantly in adipose tissue, pancreas and liver.</text>
</comment>
<comment type="domain">
    <text evidence="1">The HXXXXD motif is essential for acyltransferase activity and may constitute the binding site for the phosphate moiety of the glycerol-3-phosphate.</text>
</comment>
<comment type="disease" evidence="3 4">
    <disease id="DI-00354">
        <name>Lipodystrophy, congenital generalized, 1</name>
        <acronym>CGL1</acronym>
        <description>A form of congenital generalized lipodystrophy, a metabolic disorder characterized by a near complete absence of adipose tissue, extreme insulin resistance, hypertriglyceridemia, hepatic steatosis and early onset of diabetes. Inheritance is autosomal recessive.</description>
        <dbReference type="MIM" id="608594"/>
    </disease>
    <text>The disease is caused by variants affecting the gene represented in this entry.</text>
</comment>
<comment type="similarity">
    <text evidence="10">Belongs to the 1-acyl-sn-glycerol-3-phosphate acyltransferase family.</text>
</comment>
<gene>
    <name type="primary">AGPAT2</name>
</gene>
<keyword id="KW-0012">Acyltransferase</keyword>
<keyword id="KW-0025">Alternative splicing</keyword>
<keyword id="KW-1022">Congenital generalized lipodystrophy</keyword>
<keyword id="KW-0219">Diabetes mellitus</keyword>
<keyword id="KW-0225">Disease variant</keyword>
<keyword id="KW-0256">Endoplasmic reticulum</keyword>
<keyword id="KW-0444">Lipid biosynthesis</keyword>
<keyword id="KW-0443">Lipid metabolism</keyword>
<keyword id="KW-0472">Membrane</keyword>
<keyword id="KW-0594">Phospholipid biosynthesis</keyword>
<keyword id="KW-1208">Phospholipid metabolism</keyword>
<keyword id="KW-1267">Proteomics identification</keyword>
<keyword id="KW-1185">Reference proteome</keyword>
<keyword id="KW-0732">Signal</keyword>
<keyword id="KW-0808">Transferase</keyword>
<keyword id="KW-0812">Transmembrane</keyword>
<keyword id="KW-1133">Transmembrane helix</keyword>
<dbReference type="EC" id="2.3.1.51" evidence="4 5 6 7"/>
<dbReference type="EMBL" id="AF000237">
    <property type="protein sequence ID" value="AAC51649.1"/>
    <property type="molecule type" value="mRNA"/>
</dbReference>
<dbReference type="EMBL" id="AF011374">
    <property type="protein sequence ID" value="AAB64299.1"/>
    <property type="molecule type" value="mRNA"/>
</dbReference>
<dbReference type="EMBL" id="U56418">
    <property type="protein sequence ID" value="AAB58776.2"/>
    <property type="molecule type" value="mRNA"/>
</dbReference>
<dbReference type="EMBL" id="AL590226">
    <property type="status" value="NOT_ANNOTATED_CDS"/>
    <property type="molecule type" value="Genomic_DNA"/>
</dbReference>
<dbReference type="EMBL" id="CH471090">
    <property type="protein sequence ID" value="EAW88249.1"/>
    <property type="molecule type" value="Genomic_DNA"/>
</dbReference>
<dbReference type="EMBL" id="CH471090">
    <property type="protein sequence ID" value="EAW88251.1"/>
    <property type="molecule type" value="Genomic_DNA"/>
</dbReference>
<dbReference type="EMBL" id="BC000026">
    <property type="protein sequence ID" value="AAH00026.1"/>
    <property type="molecule type" value="mRNA"/>
</dbReference>
<dbReference type="EMBL" id="BC004529">
    <property type="protein sequence ID" value="AAH04529.1"/>
    <property type="molecule type" value="mRNA"/>
</dbReference>
<dbReference type="CCDS" id="CCDS35181.1">
    <molecule id="O15120-2"/>
</dbReference>
<dbReference type="CCDS" id="CCDS7003.1">
    <molecule id="O15120-1"/>
</dbReference>
<dbReference type="RefSeq" id="NP_001012745.1">
    <molecule id="O15120-2"/>
    <property type="nucleotide sequence ID" value="NM_001012727.2"/>
</dbReference>
<dbReference type="RefSeq" id="NP_006403.2">
    <molecule id="O15120-1"/>
    <property type="nucleotide sequence ID" value="NM_006412.3"/>
</dbReference>
<dbReference type="SMR" id="O15120"/>
<dbReference type="BioGRID" id="115806">
    <property type="interactions" value="103"/>
</dbReference>
<dbReference type="CORUM" id="O15120"/>
<dbReference type="FunCoup" id="O15120">
    <property type="interactions" value="812"/>
</dbReference>
<dbReference type="IntAct" id="O15120">
    <property type="interactions" value="65"/>
</dbReference>
<dbReference type="STRING" id="9606.ENSP00000360761"/>
<dbReference type="BindingDB" id="O15120"/>
<dbReference type="ChEMBL" id="CHEMBL4772"/>
<dbReference type="SwissLipids" id="SLP:000000096"/>
<dbReference type="iPTMnet" id="O15120"/>
<dbReference type="PhosphoSitePlus" id="O15120"/>
<dbReference type="SwissPalm" id="O15120"/>
<dbReference type="BioMuta" id="AGPAT2"/>
<dbReference type="jPOST" id="O15120"/>
<dbReference type="MassIVE" id="O15120"/>
<dbReference type="PaxDb" id="9606-ENSP00000360761"/>
<dbReference type="PeptideAtlas" id="O15120"/>
<dbReference type="ProteomicsDB" id="48457">
    <molecule id="O15120-1"/>
</dbReference>
<dbReference type="ProteomicsDB" id="48458">
    <molecule id="O15120-2"/>
</dbReference>
<dbReference type="Pumba" id="O15120"/>
<dbReference type="Antibodypedia" id="18762">
    <property type="antibodies" value="171 antibodies from 27 providers"/>
</dbReference>
<dbReference type="DNASU" id="10555"/>
<dbReference type="Ensembl" id="ENST00000371694.7">
    <molecule id="O15120-2"/>
    <property type="protein sequence ID" value="ENSP00000360759.3"/>
    <property type="gene ID" value="ENSG00000169692.14"/>
</dbReference>
<dbReference type="Ensembl" id="ENST00000371696.7">
    <molecule id="O15120-1"/>
    <property type="protein sequence ID" value="ENSP00000360761.2"/>
    <property type="gene ID" value="ENSG00000169692.14"/>
</dbReference>
<dbReference type="GeneID" id="10555"/>
<dbReference type="KEGG" id="hsa:10555"/>
<dbReference type="MANE-Select" id="ENST00000371696.7">
    <property type="protein sequence ID" value="ENSP00000360761.2"/>
    <property type="RefSeq nucleotide sequence ID" value="NM_006412.4"/>
    <property type="RefSeq protein sequence ID" value="NP_006403.2"/>
</dbReference>
<dbReference type="UCSC" id="uc004cii.2">
    <molecule id="O15120-1"/>
    <property type="organism name" value="human"/>
</dbReference>
<dbReference type="AGR" id="HGNC:325"/>
<dbReference type="CTD" id="10555"/>
<dbReference type="DisGeNET" id="10555"/>
<dbReference type="GeneCards" id="AGPAT2"/>
<dbReference type="GeneReviews" id="AGPAT2"/>
<dbReference type="HGNC" id="HGNC:325">
    <property type="gene designation" value="AGPAT2"/>
</dbReference>
<dbReference type="HPA" id="ENSG00000169692">
    <property type="expression patterns" value="Tissue enhanced (adipose tissue, liver)"/>
</dbReference>
<dbReference type="MalaCards" id="AGPAT2"/>
<dbReference type="MIM" id="603100">
    <property type="type" value="gene"/>
</dbReference>
<dbReference type="MIM" id="608594">
    <property type="type" value="phenotype"/>
</dbReference>
<dbReference type="neXtProt" id="NX_O15120"/>
<dbReference type="OpenTargets" id="ENSG00000169692"/>
<dbReference type="Orphanet" id="528">
    <property type="disease" value="Congenital generalized lipodystrophy"/>
</dbReference>
<dbReference type="PharmGKB" id="PA24622"/>
<dbReference type="VEuPathDB" id="HostDB:ENSG00000169692"/>
<dbReference type="eggNOG" id="KOG2848">
    <property type="taxonomic scope" value="Eukaryota"/>
</dbReference>
<dbReference type="GeneTree" id="ENSGT00390000008726"/>
<dbReference type="HOGENOM" id="CLU_027938_10_1_1"/>
<dbReference type="InParanoid" id="O15120"/>
<dbReference type="OMA" id="MPRPLCY"/>
<dbReference type="OrthoDB" id="202234at2759"/>
<dbReference type="PAN-GO" id="O15120">
    <property type="GO annotations" value="3 GO annotations based on evolutionary models"/>
</dbReference>
<dbReference type="PhylomeDB" id="O15120"/>
<dbReference type="TreeFam" id="TF314867"/>
<dbReference type="BioCyc" id="MetaCyc:HS09990-MONOMER"/>
<dbReference type="BRENDA" id="2.3.1.51">
    <property type="organism ID" value="2681"/>
</dbReference>
<dbReference type="PathwayCommons" id="O15120"/>
<dbReference type="Reactome" id="R-HSA-1483166">
    <property type="pathway name" value="Synthesis of PA"/>
</dbReference>
<dbReference type="Reactome" id="R-HSA-6798695">
    <property type="pathway name" value="Neutrophil degranulation"/>
</dbReference>
<dbReference type="Reactome" id="R-HSA-9841922">
    <property type="pathway name" value="MLL4 and MLL3 complexes regulate expression of PPARG target genes in adipogenesis and hepatic steatosis"/>
</dbReference>
<dbReference type="SABIO-RK" id="O15120"/>
<dbReference type="SignaLink" id="O15120"/>
<dbReference type="UniPathway" id="UPA00557">
    <property type="reaction ID" value="UER00613"/>
</dbReference>
<dbReference type="BioGRID-ORCS" id="10555">
    <property type="hits" value="41 hits in 1152 CRISPR screens"/>
</dbReference>
<dbReference type="GeneWiki" id="AGPAT2"/>
<dbReference type="GenomeRNAi" id="10555"/>
<dbReference type="Pharos" id="O15120">
    <property type="development level" value="Tchem"/>
</dbReference>
<dbReference type="PRO" id="PR:O15120"/>
<dbReference type="Proteomes" id="UP000005640">
    <property type="component" value="Chromosome 9"/>
</dbReference>
<dbReference type="RNAct" id="O15120">
    <property type="molecule type" value="protein"/>
</dbReference>
<dbReference type="Bgee" id="ENSG00000169692">
    <property type="expression patterns" value="Expressed in mucosa of transverse colon and 179 other cell types or tissues"/>
</dbReference>
<dbReference type="ExpressionAtlas" id="O15120">
    <property type="expression patterns" value="baseline and differential"/>
</dbReference>
<dbReference type="GO" id="GO:0005783">
    <property type="term" value="C:endoplasmic reticulum"/>
    <property type="evidence" value="ECO:0000314"/>
    <property type="project" value="UniProtKB"/>
</dbReference>
<dbReference type="GO" id="GO:0005789">
    <property type="term" value="C:endoplasmic reticulum membrane"/>
    <property type="evidence" value="ECO:0000304"/>
    <property type="project" value="Reactome"/>
</dbReference>
<dbReference type="GO" id="GO:0005886">
    <property type="term" value="C:plasma membrane"/>
    <property type="evidence" value="ECO:0000304"/>
    <property type="project" value="Reactome"/>
</dbReference>
<dbReference type="GO" id="GO:0035579">
    <property type="term" value="C:specific granule membrane"/>
    <property type="evidence" value="ECO:0000304"/>
    <property type="project" value="Reactome"/>
</dbReference>
<dbReference type="GO" id="GO:0003841">
    <property type="term" value="F:1-acylglycerol-3-phosphate O-acyltransferase activity"/>
    <property type="evidence" value="ECO:0000314"/>
    <property type="project" value="UniProtKB"/>
</dbReference>
<dbReference type="GO" id="GO:0016024">
    <property type="term" value="P:CDP-diacylglycerol biosynthetic process"/>
    <property type="evidence" value="ECO:0007669"/>
    <property type="project" value="UniProtKB-UniPathway"/>
</dbReference>
<dbReference type="GO" id="GO:0008544">
    <property type="term" value="P:epidermis development"/>
    <property type="evidence" value="ECO:0007669"/>
    <property type="project" value="Ensembl"/>
</dbReference>
<dbReference type="GO" id="GO:0006654">
    <property type="term" value="P:phosphatidic acid biosynthetic process"/>
    <property type="evidence" value="ECO:0000316"/>
    <property type="project" value="BHF-UCL"/>
</dbReference>
<dbReference type="GO" id="GO:0006644">
    <property type="term" value="P:phospholipid metabolic process"/>
    <property type="evidence" value="ECO:0000303"/>
    <property type="project" value="UniProtKB"/>
</dbReference>
<dbReference type="GO" id="GO:0001819">
    <property type="term" value="P:positive regulation of cytokine production"/>
    <property type="evidence" value="ECO:0000315"/>
    <property type="project" value="BHF-UCL"/>
</dbReference>
<dbReference type="GO" id="GO:0001961">
    <property type="term" value="P:positive regulation of cytokine-mediated signaling pathway"/>
    <property type="evidence" value="ECO:0000305"/>
    <property type="project" value="BHF-UCL"/>
</dbReference>
<dbReference type="GO" id="GO:0009410">
    <property type="term" value="P:response to xenobiotic stimulus"/>
    <property type="evidence" value="ECO:0007669"/>
    <property type="project" value="Ensembl"/>
</dbReference>
<dbReference type="GO" id="GO:0019432">
    <property type="term" value="P:triglyceride biosynthetic process"/>
    <property type="evidence" value="ECO:0007669"/>
    <property type="project" value="Ensembl"/>
</dbReference>
<dbReference type="CDD" id="cd07989">
    <property type="entry name" value="LPLAT_AGPAT-like"/>
    <property type="match status" value="1"/>
</dbReference>
<dbReference type="InterPro" id="IPR004552">
    <property type="entry name" value="AGP_acyltrans"/>
</dbReference>
<dbReference type="InterPro" id="IPR002123">
    <property type="entry name" value="Plipid/glycerol_acylTrfase"/>
</dbReference>
<dbReference type="NCBIfam" id="TIGR00530">
    <property type="entry name" value="AGP_acyltrn"/>
    <property type="match status" value="1"/>
</dbReference>
<dbReference type="PANTHER" id="PTHR10434">
    <property type="entry name" value="1-ACYL-SN-GLYCEROL-3-PHOSPHATE ACYLTRANSFERASE"/>
    <property type="match status" value="1"/>
</dbReference>
<dbReference type="PANTHER" id="PTHR10434:SF2">
    <property type="entry name" value="1-ACYL-SN-GLYCEROL-3-PHOSPHATE ACYLTRANSFERASE BETA"/>
    <property type="match status" value="1"/>
</dbReference>
<dbReference type="Pfam" id="PF01553">
    <property type="entry name" value="Acyltransferase"/>
    <property type="match status" value="1"/>
</dbReference>
<dbReference type="SMART" id="SM00563">
    <property type="entry name" value="PlsC"/>
    <property type="match status" value="1"/>
</dbReference>
<dbReference type="SUPFAM" id="SSF69593">
    <property type="entry name" value="Glycerol-3-phosphate (1)-acyltransferase"/>
    <property type="match status" value="1"/>
</dbReference>
<feature type="signal peptide" evidence="2">
    <location>
        <begin position="1"/>
        <end position="23"/>
    </location>
</feature>
<feature type="chain" id="PRO_0000208192" description="1-acyl-sn-glycerol-3-phosphate acyltransferase beta">
    <location>
        <begin position="24"/>
        <end position="278"/>
    </location>
</feature>
<feature type="topological domain" description="Lumenal" evidence="10">
    <location>
        <begin position="24"/>
        <end position="29"/>
    </location>
</feature>
<feature type="transmembrane region" description="Helical" evidence="2">
    <location>
        <begin position="30"/>
        <end position="50"/>
    </location>
</feature>
<feature type="topological domain" description="Cytoplasmic" evidence="10">
    <location>
        <begin position="51"/>
        <end position="121"/>
    </location>
</feature>
<feature type="transmembrane region" description="Helical" evidence="2">
    <location>
        <begin position="122"/>
        <end position="142"/>
    </location>
</feature>
<feature type="topological domain" description="Lumenal" evidence="10">
    <location>
        <begin position="143"/>
        <end position="278"/>
    </location>
</feature>
<feature type="short sequence motif" description="HXXXXD motif" evidence="1">
    <location>
        <begin position="98"/>
        <end position="103"/>
    </location>
</feature>
<feature type="short sequence motif" description="EGTR motif" evidence="13">
    <location>
        <begin position="172"/>
        <end position="175"/>
    </location>
</feature>
<feature type="splice variant" id="VSP_005071" description="In isoform 2." evidence="8">
    <location>
        <begin position="165"/>
        <end position="196"/>
    </location>
</feature>
<feature type="sequence variant" id="VAR_017328" description="In CGL1; reduced 1-acyl-sn-glycerol-3-phosphate acyltransferase activity; dbSNP:rs797045222." evidence="3 4">
    <original>G</original>
    <variation>R</variation>
    <location>
        <position position="136"/>
    </location>
</feature>
<feature type="sequence variant" id="VAR_017326" description="In CGL1; reduced 1-acyl-sn-glycerol-3-phosphate acyltransferase activity; dbSNP:rs387906356." evidence="3 4">
    <location>
        <position position="140"/>
    </location>
</feature>
<feature type="sequence variant" id="VAR_017327" description="In CGL1; reduced 1-acyl-sn-glycerol-3-phosphate acyltransferase activity; dbSNP:rs104894100." evidence="3 4">
    <original>L</original>
    <variation>P</variation>
    <location>
        <position position="228"/>
    </location>
</feature>
<feature type="sequence variant" id="VAR_017325" description="In CGL1; 90% of wild-type 1-acyl-sn-glycerol-3-phosphate acyltransferase activity; dbSNP:rs145975461." evidence="3 4">
    <original>A</original>
    <variation>V</variation>
    <location>
        <position position="239"/>
    </location>
</feature>
<feature type="sequence conflict" description="In Ref. 2; AAB64299." evidence="10" ref="2">
    <original>L</original>
    <variation>V</variation>
    <location>
        <position position="126"/>
    </location>
</feature>
<feature type="sequence conflict" description="In Ref. 7; AAH00026." evidence="10" ref="7">
    <original>V</original>
    <variation>F</variation>
    <location>
        <position position="200"/>
    </location>
</feature>
<protein>
    <recommendedName>
        <fullName>1-acyl-sn-glycerol-3-phosphate acyltransferase beta</fullName>
        <ecNumber evidence="4 5 6 7">2.3.1.51</ecNumber>
    </recommendedName>
    <alternativeName>
        <fullName>1-acylglycerol-3-phosphate O-acyltransferase 2</fullName>
        <shortName>1-AGP acyltransferase 2</shortName>
        <shortName>1-AGPAT 2</shortName>
    </alternativeName>
    <alternativeName>
        <fullName evidence="9">Lysophosphatidic acid acyltransferase beta</fullName>
        <shortName>LPAAT-beta</shortName>
    </alternativeName>
</protein>
<organism>
    <name type="scientific">Homo sapiens</name>
    <name type="common">Human</name>
    <dbReference type="NCBI Taxonomy" id="9606"/>
    <lineage>
        <taxon>Eukaryota</taxon>
        <taxon>Metazoa</taxon>
        <taxon>Chordata</taxon>
        <taxon>Craniata</taxon>
        <taxon>Vertebrata</taxon>
        <taxon>Euteleostomi</taxon>
        <taxon>Mammalia</taxon>
        <taxon>Eutheria</taxon>
        <taxon>Euarchontoglires</taxon>
        <taxon>Primates</taxon>
        <taxon>Haplorrhini</taxon>
        <taxon>Catarrhini</taxon>
        <taxon>Hominidae</taxon>
        <taxon>Homo</taxon>
    </lineage>
</organism>
<sequence length="278" mass="30914">MELWPCLAAALLLLLLLVQLSRAAEFYAKVALYCALCFTVSAVASLVCLLRHGGRTVENMSIIGWFVRSFKYFYGLRFEVRDPRRLQEARPCVIVSNHQSILDMMGLMEVLPERCVQIAKRELLFLGPVGLIMYLGGVFFINRQRSSTAMTVMADLGERMVRENLKVWIYPEGTRNDNGDLLPFKKGAFYLAVQAQVPIVPVVYSSFSSFYNTKKKFFTSGTVTVQVLEAIPTSGLTAADVPALVDTCHRAMRTTFLHISKTPQENGATAGSGVQPAQ</sequence>